<comment type="catalytic activity">
    <reaction evidence="1">
        <text>CMP + ATP = CDP + ADP</text>
        <dbReference type="Rhea" id="RHEA:11600"/>
        <dbReference type="ChEBI" id="CHEBI:30616"/>
        <dbReference type="ChEBI" id="CHEBI:58069"/>
        <dbReference type="ChEBI" id="CHEBI:60377"/>
        <dbReference type="ChEBI" id="CHEBI:456216"/>
        <dbReference type="EC" id="2.7.4.25"/>
    </reaction>
</comment>
<comment type="catalytic activity">
    <reaction evidence="1">
        <text>dCMP + ATP = dCDP + ADP</text>
        <dbReference type="Rhea" id="RHEA:25094"/>
        <dbReference type="ChEBI" id="CHEBI:30616"/>
        <dbReference type="ChEBI" id="CHEBI:57566"/>
        <dbReference type="ChEBI" id="CHEBI:58593"/>
        <dbReference type="ChEBI" id="CHEBI:456216"/>
        <dbReference type="EC" id="2.7.4.25"/>
    </reaction>
</comment>
<comment type="subcellular location">
    <subcellularLocation>
        <location evidence="1">Cytoplasm</location>
    </subcellularLocation>
</comment>
<comment type="similarity">
    <text evidence="1">Belongs to the cytidylate kinase family. Type 1 subfamily.</text>
</comment>
<sequence length="225" mass="24216">MNPLAPVLTIDGPSGAGKGTISRIVARRMGWHYLDSGALYRAVGVAASWADIDTSDASALVRCTFDTHVQFVEQGEAMRVMVNGTDATDELRLETTGALASAIAAIPEVRAALKERQRAFRELPGLVADGRDMGTVIFPDASYKVFLTASAEERAERRHKQLKDKGVSVNFDDLLREIMARDARDAQRTVAPLKPADDAVLIDTTGIGIDDVVARVMDLLPVPAA</sequence>
<protein>
    <recommendedName>
        <fullName evidence="1">Cytidylate kinase</fullName>
        <shortName evidence="1">CK</shortName>
        <ecNumber evidence="1">2.7.4.25</ecNumber>
    </recommendedName>
    <alternativeName>
        <fullName evidence="1">Cytidine monophosphate kinase</fullName>
        <shortName evidence="1">CMP kinase</shortName>
    </alternativeName>
</protein>
<evidence type="ECO:0000255" key="1">
    <source>
        <dbReference type="HAMAP-Rule" id="MF_00238"/>
    </source>
</evidence>
<dbReference type="EC" id="2.7.4.25" evidence="1"/>
<dbReference type="EMBL" id="CP001111">
    <property type="protein sequence ID" value="ACF51350.1"/>
    <property type="molecule type" value="Genomic_DNA"/>
</dbReference>
<dbReference type="RefSeq" id="WP_006361472.1">
    <property type="nucleotide sequence ID" value="NC_011071.1"/>
</dbReference>
<dbReference type="SMR" id="B4SSV1"/>
<dbReference type="STRING" id="391008.Smal_1645"/>
<dbReference type="KEGG" id="smt:Smal_1645"/>
<dbReference type="eggNOG" id="COG0283">
    <property type="taxonomic scope" value="Bacteria"/>
</dbReference>
<dbReference type="HOGENOM" id="CLU_079959_2_0_6"/>
<dbReference type="OrthoDB" id="9807434at2"/>
<dbReference type="Proteomes" id="UP000001867">
    <property type="component" value="Chromosome"/>
</dbReference>
<dbReference type="GO" id="GO:0005829">
    <property type="term" value="C:cytosol"/>
    <property type="evidence" value="ECO:0007669"/>
    <property type="project" value="TreeGrafter"/>
</dbReference>
<dbReference type="GO" id="GO:0005524">
    <property type="term" value="F:ATP binding"/>
    <property type="evidence" value="ECO:0007669"/>
    <property type="project" value="UniProtKB-UniRule"/>
</dbReference>
<dbReference type="GO" id="GO:0036430">
    <property type="term" value="F:CMP kinase activity"/>
    <property type="evidence" value="ECO:0007669"/>
    <property type="project" value="RHEA"/>
</dbReference>
<dbReference type="GO" id="GO:0036431">
    <property type="term" value="F:dCMP kinase activity"/>
    <property type="evidence" value="ECO:0007669"/>
    <property type="project" value="RHEA"/>
</dbReference>
<dbReference type="GO" id="GO:0015949">
    <property type="term" value="P:nucleobase-containing small molecule interconversion"/>
    <property type="evidence" value="ECO:0007669"/>
    <property type="project" value="TreeGrafter"/>
</dbReference>
<dbReference type="GO" id="GO:0006220">
    <property type="term" value="P:pyrimidine nucleotide metabolic process"/>
    <property type="evidence" value="ECO:0007669"/>
    <property type="project" value="UniProtKB-UniRule"/>
</dbReference>
<dbReference type="CDD" id="cd02020">
    <property type="entry name" value="CMPK"/>
    <property type="match status" value="1"/>
</dbReference>
<dbReference type="FunFam" id="3.40.50.300:FF:000262">
    <property type="entry name" value="Cytidylate kinase"/>
    <property type="match status" value="1"/>
</dbReference>
<dbReference type="Gene3D" id="3.40.50.300">
    <property type="entry name" value="P-loop containing nucleotide triphosphate hydrolases"/>
    <property type="match status" value="1"/>
</dbReference>
<dbReference type="HAMAP" id="MF_00238">
    <property type="entry name" value="Cytidyl_kinase_type1"/>
    <property type="match status" value="1"/>
</dbReference>
<dbReference type="InterPro" id="IPR003136">
    <property type="entry name" value="Cytidylate_kin"/>
</dbReference>
<dbReference type="InterPro" id="IPR011994">
    <property type="entry name" value="Cytidylate_kinase_dom"/>
</dbReference>
<dbReference type="InterPro" id="IPR027417">
    <property type="entry name" value="P-loop_NTPase"/>
</dbReference>
<dbReference type="NCBIfam" id="TIGR00017">
    <property type="entry name" value="cmk"/>
    <property type="match status" value="1"/>
</dbReference>
<dbReference type="PANTHER" id="PTHR21299:SF2">
    <property type="entry name" value="CYTIDYLATE KINASE"/>
    <property type="match status" value="1"/>
</dbReference>
<dbReference type="PANTHER" id="PTHR21299">
    <property type="entry name" value="CYTIDYLATE KINASE/PANTOATE-BETA-ALANINE LIGASE"/>
    <property type="match status" value="1"/>
</dbReference>
<dbReference type="Pfam" id="PF02224">
    <property type="entry name" value="Cytidylate_kin"/>
    <property type="match status" value="1"/>
</dbReference>
<dbReference type="SUPFAM" id="SSF52540">
    <property type="entry name" value="P-loop containing nucleoside triphosphate hydrolases"/>
    <property type="match status" value="1"/>
</dbReference>
<accession>B4SSV1</accession>
<name>KCY_STRM5</name>
<gene>
    <name evidence="1" type="primary">cmk</name>
    <name type="ordered locus">Smal_1645</name>
</gene>
<keyword id="KW-0067">ATP-binding</keyword>
<keyword id="KW-0963">Cytoplasm</keyword>
<keyword id="KW-0418">Kinase</keyword>
<keyword id="KW-0547">Nucleotide-binding</keyword>
<keyword id="KW-0808">Transferase</keyword>
<reference key="1">
    <citation type="submission" date="2008-06" db="EMBL/GenBank/DDBJ databases">
        <title>Complete sequence of Stenotrophomonas maltophilia R551-3.</title>
        <authorList>
            <consortium name="US DOE Joint Genome Institute"/>
            <person name="Lucas S."/>
            <person name="Copeland A."/>
            <person name="Lapidus A."/>
            <person name="Glavina del Rio T."/>
            <person name="Dalin E."/>
            <person name="Tice H."/>
            <person name="Pitluck S."/>
            <person name="Chain P."/>
            <person name="Malfatti S."/>
            <person name="Shin M."/>
            <person name="Vergez L."/>
            <person name="Lang D."/>
            <person name="Schmutz J."/>
            <person name="Larimer F."/>
            <person name="Land M."/>
            <person name="Hauser L."/>
            <person name="Kyrpides N."/>
            <person name="Mikhailova N."/>
            <person name="Taghavi S."/>
            <person name="Monchy S."/>
            <person name="Newman L."/>
            <person name="Vangronsveld J."/>
            <person name="van der Lelie D."/>
            <person name="Richardson P."/>
        </authorList>
    </citation>
    <scope>NUCLEOTIDE SEQUENCE [LARGE SCALE GENOMIC DNA]</scope>
    <source>
        <strain>R551-3</strain>
    </source>
</reference>
<feature type="chain" id="PRO_1000100691" description="Cytidylate kinase">
    <location>
        <begin position="1"/>
        <end position="225"/>
    </location>
</feature>
<feature type="binding site" evidence="1">
    <location>
        <begin position="12"/>
        <end position="20"/>
    </location>
    <ligand>
        <name>ATP</name>
        <dbReference type="ChEBI" id="CHEBI:30616"/>
    </ligand>
</feature>
<organism>
    <name type="scientific">Stenotrophomonas maltophilia (strain R551-3)</name>
    <dbReference type="NCBI Taxonomy" id="391008"/>
    <lineage>
        <taxon>Bacteria</taxon>
        <taxon>Pseudomonadati</taxon>
        <taxon>Pseudomonadota</taxon>
        <taxon>Gammaproteobacteria</taxon>
        <taxon>Lysobacterales</taxon>
        <taxon>Lysobacteraceae</taxon>
        <taxon>Stenotrophomonas</taxon>
        <taxon>Stenotrophomonas maltophilia group</taxon>
    </lineage>
</organism>
<proteinExistence type="inferred from homology"/>